<organism>
    <name type="scientific">Escherichia coli O1:K1 / APEC</name>
    <dbReference type="NCBI Taxonomy" id="405955"/>
    <lineage>
        <taxon>Bacteria</taxon>
        <taxon>Pseudomonadati</taxon>
        <taxon>Pseudomonadota</taxon>
        <taxon>Gammaproteobacteria</taxon>
        <taxon>Enterobacterales</taxon>
        <taxon>Enterobacteriaceae</taxon>
        <taxon>Escherichia</taxon>
    </lineage>
</organism>
<accession>A1ABS5</accession>
<comment type="function">
    <text evidence="1">Transforms N(2)-succinylglutamate into succinate and glutamate.</text>
</comment>
<comment type="catalytic activity">
    <reaction evidence="1">
        <text>N-succinyl-L-glutamate + H2O = L-glutamate + succinate</text>
        <dbReference type="Rhea" id="RHEA:15169"/>
        <dbReference type="ChEBI" id="CHEBI:15377"/>
        <dbReference type="ChEBI" id="CHEBI:29985"/>
        <dbReference type="ChEBI" id="CHEBI:30031"/>
        <dbReference type="ChEBI" id="CHEBI:58763"/>
        <dbReference type="EC" id="3.5.1.96"/>
    </reaction>
</comment>
<comment type="cofactor">
    <cofactor evidence="1">
        <name>Zn(2+)</name>
        <dbReference type="ChEBI" id="CHEBI:29105"/>
    </cofactor>
    <text evidence="1">Binds 1 zinc ion per subunit.</text>
</comment>
<comment type="pathway">
    <text evidence="1">Amino-acid degradation; L-arginine degradation via AST pathway; L-glutamate and succinate from L-arginine: step 5/5.</text>
</comment>
<comment type="similarity">
    <text evidence="1">Belongs to the AspA/AstE family. Succinylglutamate desuccinylase subfamily.</text>
</comment>
<proteinExistence type="inferred from homology"/>
<feature type="chain" id="PRO_1000017322" description="Succinylglutamate desuccinylase">
    <location>
        <begin position="1"/>
        <end position="322"/>
    </location>
</feature>
<feature type="active site" evidence="1">
    <location>
        <position position="210"/>
    </location>
</feature>
<feature type="binding site" evidence="1">
    <location>
        <position position="53"/>
    </location>
    <ligand>
        <name>Zn(2+)</name>
        <dbReference type="ChEBI" id="CHEBI:29105"/>
    </ligand>
</feature>
<feature type="binding site" evidence="1">
    <location>
        <position position="56"/>
    </location>
    <ligand>
        <name>Zn(2+)</name>
        <dbReference type="ChEBI" id="CHEBI:29105"/>
    </ligand>
</feature>
<feature type="binding site" evidence="1">
    <location>
        <position position="147"/>
    </location>
    <ligand>
        <name>Zn(2+)</name>
        <dbReference type="ChEBI" id="CHEBI:29105"/>
    </ligand>
</feature>
<protein>
    <recommendedName>
        <fullName evidence="1">Succinylglutamate desuccinylase</fullName>
        <ecNumber evidence="1">3.5.1.96</ecNumber>
    </recommendedName>
</protein>
<gene>
    <name evidence="1" type="primary">astE</name>
    <name type="ordered locus">Ecok1_16210</name>
    <name type="ORF">APECO1_813</name>
</gene>
<keyword id="KW-0056">Arginine metabolism</keyword>
<keyword id="KW-0378">Hydrolase</keyword>
<keyword id="KW-0479">Metal-binding</keyword>
<keyword id="KW-1185">Reference proteome</keyword>
<keyword id="KW-0862">Zinc</keyword>
<reference key="1">
    <citation type="journal article" date="2007" name="J. Bacteriol.">
        <title>The genome sequence of avian pathogenic Escherichia coli strain O1:K1:H7 shares strong similarities with human extraintestinal pathogenic E. coli genomes.</title>
        <authorList>
            <person name="Johnson T.J."/>
            <person name="Kariyawasam S."/>
            <person name="Wannemuehler Y."/>
            <person name="Mangiamele P."/>
            <person name="Johnson S.J."/>
            <person name="Doetkott C."/>
            <person name="Skyberg J.A."/>
            <person name="Lynne A.M."/>
            <person name="Johnson J.R."/>
            <person name="Nolan L.K."/>
        </authorList>
    </citation>
    <scope>NUCLEOTIDE SEQUENCE [LARGE SCALE GENOMIC DNA]</scope>
</reference>
<dbReference type="EC" id="3.5.1.96" evidence="1"/>
<dbReference type="EMBL" id="CP000468">
    <property type="protein sequence ID" value="ABJ01115.1"/>
    <property type="molecule type" value="Genomic_DNA"/>
</dbReference>
<dbReference type="RefSeq" id="WP_000368521.1">
    <property type="nucleotide sequence ID" value="NZ_CADILS010000002.1"/>
</dbReference>
<dbReference type="SMR" id="A1ABS5"/>
<dbReference type="KEGG" id="ecv:APECO1_813"/>
<dbReference type="HOGENOM" id="CLU_071608_0_0_6"/>
<dbReference type="UniPathway" id="UPA00185">
    <property type="reaction ID" value="UER00283"/>
</dbReference>
<dbReference type="Proteomes" id="UP000008216">
    <property type="component" value="Chromosome"/>
</dbReference>
<dbReference type="GO" id="GO:0016788">
    <property type="term" value="F:hydrolase activity, acting on ester bonds"/>
    <property type="evidence" value="ECO:0007669"/>
    <property type="project" value="UniProtKB-UniRule"/>
</dbReference>
<dbReference type="GO" id="GO:0009017">
    <property type="term" value="F:succinylglutamate desuccinylase activity"/>
    <property type="evidence" value="ECO:0007669"/>
    <property type="project" value="UniProtKB-EC"/>
</dbReference>
<dbReference type="GO" id="GO:0008270">
    <property type="term" value="F:zinc ion binding"/>
    <property type="evidence" value="ECO:0007669"/>
    <property type="project" value="UniProtKB-UniRule"/>
</dbReference>
<dbReference type="GO" id="GO:0019544">
    <property type="term" value="P:arginine catabolic process to glutamate"/>
    <property type="evidence" value="ECO:0007669"/>
    <property type="project" value="UniProtKB-UniRule"/>
</dbReference>
<dbReference type="GO" id="GO:0019545">
    <property type="term" value="P:arginine catabolic process to succinate"/>
    <property type="evidence" value="ECO:0007669"/>
    <property type="project" value="UniProtKB-UniRule"/>
</dbReference>
<dbReference type="CDD" id="cd03855">
    <property type="entry name" value="M14_ASTE"/>
    <property type="match status" value="1"/>
</dbReference>
<dbReference type="FunFam" id="3.40.630.10:FF:000017">
    <property type="entry name" value="Succinylglutamate desuccinylase"/>
    <property type="match status" value="1"/>
</dbReference>
<dbReference type="Gene3D" id="3.40.630.10">
    <property type="entry name" value="Zn peptidases"/>
    <property type="match status" value="1"/>
</dbReference>
<dbReference type="HAMAP" id="MF_00767">
    <property type="entry name" value="Arg_catab_AstE"/>
    <property type="match status" value="1"/>
</dbReference>
<dbReference type="InterPro" id="IPR050178">
    <property type="entry name" value="AspA/AstE_fam"/>
</dbReference>
<dbReference type="InterPro" id="IPR055438">
    <property type="entry name" value="AstE_AspA_cat"/>
</dbReference>
<dbReference type="InterPro" id="IPR007036">
    <property type="entry name" value="Aste_AspA_hybrid_dom"/>
</dbReference>
<dbReference type="InterPro" id="IPR016681">
    <property type="entry name" value="SuccinylGlu_desuccinylase"/>
</dbReference>
<dbReference type="NCBIfam" id="TIGR03242">
    <property type="entry name" value="arg_catab_astE"/>
    <property type="match status" value="1"/>
</dbReference>
<dbReference type="NCBIfam" id="NF003706">
    <property type="entry name" value="PRK05324.1"/>
    <property type="match status" value="1"/>
</dbReference>
<dbReference type="PANTHER" id="PTHR15162">
    <property type="entry name" value="ASPARTOACYLASE"/>
    <property type="match status" value="1"/>
</dbReference>
<dbReference type="PANTHER" id="PTHR15162:SF7">
    <property type="entry name" value="SUCCINYLGLUTAMATE DESUCCINYLASE"/>
    <property type="match status" value="1"/>
</dbReference>
<dbReference type="Pfam" id="PF24827">
    <property type="entry name" value="AstE_AspA_cat"/>
    <property type="match status" value="1"/>
</dbReference>
<dbReference type="Pfam" id="PF04952">
    <property type="entry name" value="AstE_AspA_hybrid"/>
    <property type="match status" value="1"/>
</dbReference>
<dbReference type="PIRSF" id="PIRSF017020">
    <property type="entry name" value="AstE"/>
    <property type="match status" value="1"/>
</dbReference>
<dbReference type="SUPFAM" id="SSF53187">
    <property type="entry name" value="Zn-dependent exopeptidases"/>
    <property type="match status" value="1"/>
</dbReference>
<name>ASTE_ECOK1</name>
<evidence type="ECO:0000255" key="1">
    <source>
        <dbReference type="HAMAP-Rule" id="MF_00767"/>
    </source>
</evidence>
<sequence length="322" mass="35855">MDNFLALTLTGKKPVITEREINGVRWRWLGDGVLELTPLTPPQGVLVISAGIHGNETAPVEMLDALLGAISHGEIPLRWRLLVILGNPPALKQGKRYCHSDMNRMFGGRWQLFAESGETCRARELEQCLEDFYDQGKESVRWHLDLHTAIRGSLHPQFGVLPQRDIPWDEKFLTWLGAAGLEALVFHQEPGGTFTHFSARHFGALACTLELGKALPFGQNDLRQFAVTASAIAALLSGESVGIVRTPPLRYRVVSQITRHSPSFEMHMANDTLNFMPFEKGTLLAQDGEERFTVTHDVEYVLFPNPLVALGLRAGLMLEKIS</sequence>